<gene>
    <name evidence="1" type="primary">rplX</name>
    <name type="ordered locus">BG0501</name>
</gene>
<sequence length="101" mass="11381">MKTKLKIGDSVKILSGKDKGRIGKIASINRKKNKVIVESCNMVKKVIKARTPQEKGKIIDKEAAIDISNVIIFIKGTSSRLGIRFENNEKIRYLKKNGQRI</sequence>
<evidence type="ECO:0000255" key="1">
    <source>
        <dbReference type="HAMAP-Rule" id="MF_01326"/>
    </source>
</evidence>
<evidence type="ECO:0000305" key="2"/>
<feature type="chain" id="PRO_0000241573" description="Large ribosomal subunit protein uL24">
    <location>
        <begin position="1"/>
        <end position="101"/>
    </location>
</feature>
<organism>
    <name type="scientific">Borrelia garinii subsp. bavariensis (strain ATCC BAA-2496 / DSM 23469 / PBi)</name>
    <name type="common">Borreliella bavariensis</name>
    <dbReference type="NCBI Taxonomy" id="290434"/>
    <lineage>
        <taxon>Bacteria</taxon>
        <taxon>Pseudomonadati</taxon>
        <taxon>Spirochaetota</taxon>
        <taxon>Spirochaetia</taxon>
        <taxon>Spirochaetales</taxon>
        <taxon>Borreliaceae</taxon>
        <taxon>Borreliella</taxon>
    </lineage>
</organism>
<keyword id="KW-0687">Ribonucleoprotein</keyword>
<keyword id="KW-0689">Ribosomal protein</keyword>
<keyword id="KW-0694">RNA-binding</keyword>
<keyword id="KW-0699">rRNA-binding</keyword>
<proteinExistence type="inferred from homology"/>
<comment type="function">
    <text evidence="1">One of two assembly initiator proteins, it binds directly to the 5'-end of the 23S rRNA, where it nucleates assembly of the 50S subunit.</text>
</comment>
<comment type="function">
    <text evidence="1">One of the proteins that surrounds the polypeptide exit tunnel on the outside of the subunit.</text>
</comment>
<comment type="subunit">
    <text evidence="1">Part of the 50S ribosomal subunit.</text>
</comment>
<comment type="similarity">
    <text evidence="1">Belongs to the universal ribosomal protein uL24 family.</text>
</comment>
<dbReference type="EMBL" id="CP000013">
    <property type="protein sequence ID" value="AAU07340.1"/>
    <property type="molecule type" value="Genomic_DNA"/>
</dbReference>
<dbReference type="RefSeq" id="WP_011193808.1">
    <property type="nucleotide sequence ID" value="NZ_CP028872.1"/>
</dbReference>
<dbReference type="SMR" id="Q661D1"/>
<dbReference type="GeneID" id="45161284"/>
<dbReference type="KEGG" id="bga:BG0501"/>
<dbReference type="eggNOG" id="COG0198">
    <property type="taxonomic scope" value="Bacteria"/>
</dbReference>
<dbReference type="HOGENOM" id="CLU_093315_2_3_12"/>
<dbReference type="OrthoDB" id="9807419at2"/>
<dbReference type="Proteomes" id="UP000002276">
    <property type="component" value="Chromosome"/>
</dbReference>
<dbReference type="GO" id="GO:1990904">
    <property type="term" value="C:ribonucleoprotein complex"/>
    <property type="evidence" value="ECO:0007669"/>
    <property type="project" value="UniProtKB-KW"/>
</dbReference>
<dbReference type="GO" id="GO:0005840">
    <property type="term" value="C:ribosome"/>
    <property type="evidence" value="ECO:0007669"/>
    <property type="project" value="UniProtKB-KW"/>
</dbReference>
<dbReference type="GO" id="GO:0019843">
    <property type="term" value="F:rRNA binding"/>
    <property type="evidence" value="ECO:0007669"/>
    <property type="project" value="UniProtKB-UniRule"/>
</dbReference>
<dbReference type="GO" id="GO:0003735">
    <property type="term" value="F:structural constituent of ribosome"/>
    <property type="evidence" value="ECO:0007669"/>
    <property type="project" value="InterPro"/>
</dbReference>
<dbReference type="GO" id="GO:0006412">
    <property type="term" value="P:translation"/>
    <property type="evidence" value="ECO:0007669"/>
    <property type="project" value="UniProtKB-UniRule"/>
</dbReference>
<dbReference type="CDD" id="cd06089">
    <property type="entry name" value="KOW_RPL26"/>
    <property type="match status" value="1"/>
</dbReference>
<dbReference type="Gene3D" id="2.30.30.30">
    <property type="match status" value="1"/>
</dbReference>
<dbReference type="HAMAP" id="MF_01326_B">
    <property type="entry name" value="Ribosomal_uL24_B"/>
    <property type="match status" value="1"/>
</dbReference>
<dbReference type="InterPro" id="IPR005824">
    <property type="entry name" value="KOW"/>
</dbReference>
<dbReference type="InterPro" id="IPR014722">
    <property type="entry name" value="Rib_uL2_dom2"/>
</dbReference>
<dbReference type="InterPro" id="IPR003256">
    <property type="entry name" value="Ribosomal_uL24"/>
</dbReference>
<dbReference type="InterPro" id="IPR005825">
    <property type="entry name" value="Ribosomal_uL24_CS"/>
</dbReference>
<dbReference type="InterPro" id="IPR041988">
    <property type="entry name" value="Ribosomal_uL24_KOW"/>
</dbReference>
<dbReference type="InterPro" id="IPR008991">
    <property type="entry name" value="Translation_prot_SH3-like_sf"/>
</dbReference>
<dbReference type="NCBIfam" id="TIGR01079">
    <property type="entry name" value="rplX_bact"/>
    <property type="match status" value="1"/>
</dbReference>
<dbReference type="PANTHER" id="PTHR12903">
    <property type="entry name" value="MITOCHONDRIAL RIBOSOMAL PROTEIN L24"/>
    <property type="match status" value="1"/>
</dbReference>
<dbReference type="Pfam" id="PF00467">
    <property type="entry name" value="KOW"/>
    <property type="match status" value="1"/>
</dbReference>
<dbReference type="Pfam" id="PF17136">
    <property type="entry name" value="ribosomal_L24"/>
    <property type="match status" value="1"/>
</dbReference>
<dbReference type="SMART" id="SM00739">
    <property type="entry name" value="KOW"/>
    <property type="match status" value="1"/>
</dbReference>
<dbReference type="SUPFAM" id="SSF50104">
    <property type="entry name" value="Translation proteins SH3-like domain"/>
    <property type="match status" value="1"/>
</dbReference>
<dbReference type="PROSITE" id="PS01108">
    <property type="entry name" value="RIBOSOMAL_L24"/>
    <property type="match status" value="1"/>
</dbReference>
<protein>
    <recommendedName>
        <fullName evidence="1">Large ribosomal subunit protein uL24</fullName>
    </recommendedName>
    <alternativeName>
        <fullName evidence="2">50S ribosomal protein L24</fullName>
    </alternativeName>
</protein>
<accession>Q661D1</accession>
<name>RL24_BORGP</name>
<reference key="1">
    <citation type="journal article" date="2004" name="Nucleic Acids Res.">
        <title>Comparative analysis of the Borrelia garinii genome.</title>
        <authorList>
            <person name="Gloeckner G."/>
            <person name="Lehmann R."/>
            <person name="Romualdi A."/>
            <person name="Pradella S."/>
            <person name="Schulte-Spechtel U."/>
            <person name="Schilhabel M."/>
            <person name="Wilske B."/>
            <person name="Suehnel J."/>
            <person name="Platzer M."/>
        </authorList>
    </citation>
    <scope>NUCLEOTIDE SEQUENCE [LARGE SCALE GENOMIC DNA]</scope>
    <source>
        <strain>ATCC BAA-2496 / DSM 23469 / PBi</strain>
    </source>
</reference>